<gene>
    <name type="ORF">AN6010</name>
</gene>
<name>HSP7M_EMENI</name>
<proteinExistence type="evidence at protein level"/>
<feature type="transit peptide" description="Mitochondrion" evidence="4">
    <location>
        <begin position="1"/>
        <end position="33"/>
    </location>
</feature>
<feature type="chain" id="PRO_0000348278" description="Iron-sulfur cluster biogenesis chaperone, mitochondrial">
    <location>
        <begin position="34"/>
        <end position="666"/>
    </location>
</feature>
<feature type="region of interest" description="Disordered" evidence="5">
    <location>
        <begin position="635"/>
        <end position="666"/>
    </location>
</feature>
<feature type="coiled-coil region" evidence="4">
    <location>
        <begin position="566"/>
        <end position="637"/>
    </location>
</feature>
<feature type="compositionally biased region" description="Low complexity" evidence="5">
    <location>
        <begin position="648"/>
        <end position="666"/>
    </location>
</feature>
<comment type="function">
    <text evidence="3">Required for the assembly of iron-sulfur (Fe/S) clusters in mitochondria (By similarity). Assisted by the DnaJ-like co-chaperone jac1 and the nucleotide exchange factor mge1, it mediates ATP-dependent Fe-S cluster transfer from the scaffold proteins isu1/isu2 to grx5 (By similarity).</text>
</comment>
<comment type="function">
    <text evidence="1">Essential component of the PAM complex, a complex required for the translocation of transit peptide-containing proteins from the inner membrane into the mitochondrial matrix in an ATP-dependent manner (By similarity). Constitutes the ATP-driven core of the motor and binds the precursor preprotein (By similarity).</text>
</comment>
<comment type="catalytic activity">
    <reaction evidence="2">
        <text>ATP + H2O = ADP + phosphate + H(+)</text>
        <dbReference type="Rhea" id="RHEA:13065"/>
        <dbReference type="ChEBI" id="CHEBI:15377"/>
        <dbReference type="ChEBI" id="CHEBI:15378"/>
        <dbReference type="ChEBI" id="CHEBI:30616"/>
        <dbReference type="ChEBI" id="CHEBI:43474"/>
        <dbReference type="ChEBI" id="CHEBI:456216"/>
        <dbReference type="EC" id="3.6.4.10"/>
    </reaction>
</comment>
<comment type="subunit">
    <text evidence="1 3">Interacts with the Fe/S cluster assembly and transfer machinery (By similarity). Component of the PAM complex (By similarity).</text>
</comment>
<comment type="subcellular location">
    <subcellularLocation>
        <location evidence="1">Mitochondrion matrix</location>
    </subcellularLocation>
</comment>
<comment type="induction">
    <text evidence="6">Up-regulated when grown with elevated levels of potassium chloride.</text>
</comment>
<comment type="similarity">
    <text evidence="7">Belongs to the heat shock protein 70 family.</text>
</comment>
<reference key="1">
    <citation type="journal article" date="2005" name="Nature">
        <title>Sequencing of Aspergillus nidulans and comparative analysis with A. fumigatus and A. oryzae.</title>
        <authorList>
            <person name="Galagan J.E."/>
            <person name="Calvo S.E."/>
            <person name="Cuomo C."/>
            <person name="Ma L.-J."/>
            <person name="Wortman J.R."/>
            <person name="Batzoglou S."/>
            <person name="Lee S.-I."/>
            <person name="Bastuerkmen M."/>
            <person name="Spevak C.C."/>
            <person name="Clutterbuck J."/>
            <person name="Kapitonov V."/>
            <person name="Jurka J."/>
            <person name="Scazzocchio C."/>
            <person name="Farman M.L."/>
            <person name="Butler J."/>
            <person name="Purcell S."/>
            <person name="Harris S."/>
            <person name="Braus G.H."/>
            <person name="Draht O."/>
            <person name="Busch S."/>
            <person name="D'Enfert C."/>
            <person name="Bouchier C."/>
            <person name="Goldman G.H."/>
            <person name="Bell-Pedersen D."/>
            <person name="Griffiths-Jones S."/>
            <person name="Doonan J.H."/>
            <person name="Yu J."/>
            <person name="Vienken K."/>
            <person name="Pain A."/>
            <person name="Freitag M."/>
            <person name="Selker E.U."/>
            <person name="Archer D.B."/>
            <person name="Penalva M.A."/>
            <person name="Oakley B.R."/>
            <person name="Momany M."/>
            <person name="Tanaka T."/>
            <person name="Kumagai T."/>
            <person name="Asai K."/>
            <person name="Machida M."/>
            <person name="Nierman W.C."/>
            <person name="Denning D.W."/>
            <person name="Caddick M.X."/>
            <person name="Hynes M."/>
            <person name="Paoletti M."/>
            <person name="Fischer R."/>
            <person name="Miller B.L."/>
            <person name="Dyer P.S."/>
            <person name="Sachs M.S."/>
            <person name="Osmani S.A."/>
            <person name="Birren B.W."/>
        </authorList>
    </citation>
    <scope>NUCLEOTIDE SEQUENCE [LARGE SCALE GENOMIC DNA]</scope>
    <source>
        <strain>FGSC A4 / ATCC 38163 / CBS 112.46 / NRRL 194 / M139</strain>
    </source>
</reference>
<reference key="2">
    <citation type="journal article" date="2009" name="Fungal Genet. Biol.">
        <title>The 2008 update of the Aspergillus nidulans genome annotation: a community effort.</title>
        <authorList>
            <person name="Wortman J.R."/>
            <person name="Gilsenan J.M."/>
            <person name="Joardar V."/>
            <person name="Deegan J."/>
            <person name="Clutterbuck J."/>
            <person name="Andersen M.R."/>
            <person name="Archer D."/>
            <person name="Bencina M."/>
            <person name="Braus G."/>
            <person name="Coutinho P."/>
            <person name="von Dohren H."/>
            <person name="Doonan J."/>
            <person name="Driessen A.J."/>
            <person name="Durek P."/>
            <person name="Espeso E."/>
            <person name="Fekete E."/>
            <person name="Flipphi M."/>
            <person name="Estrada C.G."/>
            <person name="Geysens S."/>
            <person name="Goldman G."/>
            <person name="de Groot P.W."/>
            <person name="Hansen K."/>
            <person name="Harris S.D."/>
            <person name="Heinekamp T."/>
            <person name="Helmstaedt K."/>
            <person name="Henrissat B."/>
            <person name="Hofmann G."/>
            <person name="Homan T."/>
            <person name="Horio T."/>
            <person name="Horiuchi H."/>
            <person name="James S."/>
            <person name="Jones M."/>
            <person name="Karaffa L."/>
            <person name="Karanyi Z."/>
            <person name="Kato M."/>
            <person name="Keller N."/>
            <person name="Kelly D.E."/>
            <person name="Kiel J.A."/>
            <person name="Kim J.M."/>
            <person name="van der Klei I.J."/>
            <person name="Klis F.M."/>
            <person name="Kovalchuk A."/>
            <person name="Krasevec N."/>
            <person name="Kubicek C.P."/>
            <person name="Liu B."/>
            <person name="Maccabe A."/>
            <person name="Meyer V."/>
            <person name="Mirabito P."/>
            <person name="Miskei M."/>
            <person name="Mos M."/>
            <person name="Mullins J."/>
            <person name="Nelson D.R."/>
            <person name="Nielsen J."/>
            <person name="Oakley B.R."/>
            <person name="Osmani S.A."/>
            <person name="Pakula T."/>
            <person name="Paszewski A."/>
            <person name="Paulsen I."/>
            <person name="Pilsyk S."/>
            <person name="Pocsi I."/>
            <person name="Punt P.J."/>
            <person name="Ram A.F."/>
            <person name="Ren Q."/>
            <person name="Robellet X."/>
            <person name="Robson G."/>
            <person name="Seiboth B."/>
            <person name="van Solingen P."/>
            <person name="Specht T."/>
            <person name="Sun J."/>
            <person name="Taheri-Talesh N."/>
            <person name="Takeshita N."/>
            <person name="Ussery D."/>
            <person name="vanKuyk P.A."/>
            <person name="Visser H."/>
            <person name="van de Vondervoort P.J."/>
            <person name="de Vries R.P."/>
            <person name="Walton J."/>
            <person name="Xiang X."/>
            <person name="Xiong Y."/>
            <person name="Zeng A.P."/>
            <person name="Brandt B.W."/>
            <person name="Cornell M.J."/>
            <person name="van den Hondel C.A."/>
            <person name="Visser J."/>
            <person name="Oliver S.G."/>
            <person name="Turner G."/>
        </authorList>
    </citation>
    <scope>GENOME REANNOTATION</scope>
    <source>
        <strain>FGSC A4 / ATCC 38163 / CBS 112.46 / NRRL 194 / M139</strain>
    </source>
</reference>
<reference key="3">
    <citation type="journal article" date="2007" name="Fungal Genet. Biol.">
        <title>Proteome map of Aspergillus nidulans during osmoadaptation.</title>
        <authorList>
            <person name="Kim Y."/>
            <person name="Nandakumar M.P."/>
            <person name="Marten M.R."/>
        </authorList>
    </citation>
    <scope>INDUCTION</scope>
    <scope>IDENTIFICATION BY MASS SPECTROMETRY</scope>
</reference>
<sequence>MLSSRLSRALPRTAPFARAPAFRLPSTAARRWNSTEEKVKGQVIGIDLGTTNSAVAVMEGKTPKIIENAEGARTTPSVVAFAQDGERLVGIAAKRQAVVNPENTLFATKRLIGRKFTDAEVQRDIKEVPYKIVQHTNGDAWVEARGEKYSPAQIGGFVLGKMKETAENYLSKPVKNAVVTVPAYFNDSQRQATKDAGQIAGLNVLRVVNEPTAAALAYGLEKEADRVVAVYDLGGGTFDISVLEIQKGVFEVKSTNGDTHLGGEDFDISLVRHIVQQFKKESGLDLSNDRMAIQRIREAAEKAKIELSSSLQTEINLPFITADASGAKHINLKMTRAQLESLVEPLISRTVDPVRKALKDANLQSSEVQDIILVGGMTRMPKVTESVKSLFGREPAKSVNPDEAVAIGAAIQGAVLAGEVTDVLLLDVTPLSLGIETLGGVFTRLINRNTTIPTKKSQTFSTAADFQTAVEIKVFQGERELVKDNKLLGNFQLVGIPPAHRGVPQIEVTFDIDADSIVHVHAKDKSTNKDQSITIASGSGLSDAEIQSMVEDAEKYGAQDKERKAAIEAANRADSVLNDTEKALKEFEDRLDKAEAEQIREKINTLREFVAKNQSGEVAATAEELKQKTDELQTASLTLFDKMHKAQSEQQQQPNQGETGQGENKP</sequence>
<dbReference type="EC" id="3.6.4.10" evidence="2"/>
<dbReference type="EMBL" id="AACD01000103">
    <property type="protein sequence ID" value="EAA57651.1"/>
    <property type="molecule type" value="Genomic_DNA"/>
</dbReference>
<dbReference type="EMBL" id="BN001301">
    <property type="protein sequence ID" value="CBF70370.1"/>
    <property type="molecule type" value="Genomic_DNA"/>
</dbReference>
<dbReference type="RefSeq" id="XP_663614.1">
    <property type="nucleotide sequence ID" value="XM_658522.1"/>
</dbReference>
<dbReference type="SMR" id="Q5B0C0"/>
<dbReference type="FunCoup" id="Q5B0C0">
    <property type="interactions" value="1492"/>
</dbReference>
<dbReference type="STRING" id="227321.Q5B0C0"/>
<dbReference type="EnsemblFungi" id="CBF70370">
    <property type="protein sequence ID" value="CBF70370"/>
    <property type="gene ID" value="ANIA_06010"/>
</dbReference>
<dbReference type="KEGG" id="ani:ANIA_06010"/>
<dbReference type="VEuPathDB" id="FungiDB:AN6010"/>
<dbReference type="eggNOG" id="KOG0102">
    <property type="taxonomic scope" value="Eukaryota"/>
</dbReference>
<dbReference type="HOGENOM" id="CLU_005965_2_1_1"/>
<dbReference type="InParanoid" id="Q5B0C0"/>
<dbReference type="OMA" id="MGTDWKI"/>
<dbReference type="OrthoDB" id="2401965at2759"/>
<dbReference type="Proteomes" id="UP000000560">
    <property type="component" value="Chromosome I"/>
</dbReference>
<dbReference type="GO" id="GO:0005737">
    <property type="term" value="C:cytoplasm"/>
    <property type="evidence" value="ECO:0000318"/>
    <property type="project" value="GO_Central"/>
</dbReference>
<dbReference type="GO" id="GO:0005759">
    <property type="term" value="C:mitochondrial matrix"/>
    <property type="evidence" value="ECO:0007669"/>
    <property type="project" value="UniProtKB-SubCell"/>
</dbReference>
<dbReference type="GO" id="GO:0005739">
    <property type="term" value="C:mitochondrion"/>
    <property type="evidence" value="ECO:0000318"/>
    <property type="project" value="GO_Central"/>
</dbReference>
<dbReference type="GO" id="GO:0005524">
    <property type="term" value="F:ATP binding"/>
    <property type="evidence" value="ECO:0007669"/>
    <property type="project" value="UniProtKB-KW"/>
</dbReference>
<dbReference type="GO" id="GO:0016887">
    <property type="term" value="F:ATP hydrolysis activity"/>
    <property type="evidence" value="ECO:0000318"/>
    <property type="project" value="GO_Central"/>
</dbReference>
<dbReference type="GO" id="GO:0140662">
    <property type="term" value="F:ATP-dependent protein folding chaperone"/>
    <property type="evidence" value="ECO:0007669"/>
    <property type="project" value="InterPro"/>
</dbReference>
<dbReference type="GO" id="GO:0031072">
    <property type="term" value="F:heat shock protein binding"/>
    <property type="evidence" value="ECO:0000318"/>
    <property type="project" value="GO_Central"/>
</dbReference>
<dbReference type="GO" id="GO:0044183">
    <property type="term" value="F:protein folding chaperone"/>
    <property type="evidence" value="ECO:0000318"/>
    <property type="project" value="GO_Central"/>
</dbReference>
<dbReference type="GO" id="GO:0051082">
    <property type="term" value="F:unfolded protein binding"/>
    <property type="evidence" value="ECO:0007669"/>
    <property type="project" value="InterPro"/>
</dbReference>
<dbReference type="GO" id="GO:0071470">
    <property type="term" value="P:cellular response to osmotic stress"/>
    <property type="evidence" value="ECO:0000270"/>
    <property type="project" value="AspGD"/>
</dbReference>
<dbReference type="GO" id="GO:0051085">
    <property type="term" value="P:chaperone cofactor-dependent protein refolding"/>
    <property type="evidence" value="ECO:0000318"/>
    <property type="project" value="GO_Central"/>
</dbReference>
<dbReference type="GO" id="GO:0016226">
    <property type="term" value="P:iron-sulfur cluster assembly"/>
    <property type="evidence" value="ECO:0000318"/>
    <property type="project" value="GO_Central"/>
</dbReference>
<dbReference type="GO" id="GO:0042026">
    <property type="term" value="P:protein refolding"/>
    <property type="evidence" value="ECO:0000318"/>
    <property type="project" value="GO_Central"/>
</dbReference>
<dbReference type="GO" id="GO:0009847">
    <property type="term" value="P:spore germination"/>
    <property type="evidence" value="ECO:0000315"/>
    <property type="project" value="AspGD"/>
</dbReference>
<dbReference type="CDD" id="cd11734">
    <property type="entry name" value="ASKHA_NBD_HSP70_Ssc1_3"/>
    <property type="match status" value="1"/>
</dbReference>
<dbReference type="FunFam" id="2.60.34.10:FF:000014">
    <property type="entry name" value="Chaperone protein DnaK HSP70"/>
    <property type="match status" value="1"/>
</dbReference>
<dbReference type="FunFam" id="3.30.420.40:FF:000020">
    <property type="entry name" value="Chaperone protein HscA homolog"/>
    <property type="match status" value="1"/>
</dbReference>
<dbReference type="FunFam" id="3.30.30.30:FF:000003">
    <property type="entry name" value="Heat shock protein 9"/>
    <property type="match status" value="1"/>
</dbReference>
<dbReference type="FunFam" id="1.20.1270.10:FF:000007">
    <property type="entry name" value="Heat shock protein, mitochondrial"/>
    <property type="match status" value="1"/>
</dbReference>
<dbReference type="FunFam" id="3.30.420.40:FF:000004">
    <property type="entry name" value="Molecular chaperone DnaK"/>
    <property type="match status" value="1"/>
</dbReference>
<dbReference type="FunFam" id="3.90.640.10:FF:000003">
    <property type="entry name" value="Molecular chaperone DnaK"/>
    <property type="match status" value="1"/>
</dbReference>
<dbReference type="Gene3D" id="1.20.1270.10">
    <property type="match status" value="1"/>
</dbReference>
<dbReference type="Gene3D" id="3.30.420.40">
    <property type="match status" value="2"/>
</dbReference>
<dbReference type="Gene3D" id="3.90.640.10">
    <property type="entry name" value="Actin, Chain A, domain 4"/>
    <property type="match status" value="1"/>
</dbReference>
<dbReference type="Gene3D" id="2.60.34.10">
    <property type="entry name" value="Substrate Binding Domain Of DNAk, Chain A, domain 1"/>
    <property type="match status" value="1"/>
</dbReference>
<dbReference type="HAMAP" id="MF_00332">
    <property type="entry name" value="DnaK"/>
    <property type="match status" value="1"/>
</dbReference>
<dbReference type="InterPro" id="IPR043129">
    <property type="entry name" value="ATPase_NBD"/>
</dbReference>
<dbReference type="InterPro" id="IPR012725">
    <property type="entry name" value="Chaperone_DnaK"/>
</dbReference>
<dbReference type="InterPro" id="IPR018181">
    <property type="entry name" value="Heat_shock_70_CS"/>
</dbReference>
<dbReference type="InterPro" id="IPR029048">
    <property type="entry name" value="HSP70_C_sf"/>
</dbReference>
<dbReference type="InterPro" id="IPR029047">
    <property type="entry name" value="HSP70_peptide-bd_sf"/>
</dbReference>
<dbReference type="InterPro" id="IPR013126">
    <property type="entry name" value="Hsp_70_fam"/>
</dbReference>
<dbReference type="NCBIfam" id="NF001413">
    <property type="entry name" value="PRK00290.1"/>
    <property type="match status" value="1"/>
</dbReference>
<dbReference type="NCBIfam" id="NF003520">
    <property type="entry name" value="PRK05183.1"/>
    <property type="match status" value="1"/>
</dbReference>
<dbReference type="NCBIfam" id="TIGR02350">
    <property type="entry name" value="prok_dnaK"/>
    <property type="match status" value="1"/>
</dbReference>
<dbReference type="PANTHER" id="PTHR19375">
    <property type="entry name" value="HEAT SHOCK PROTEIN 70KDA"/>
    <property type="match status" value="1"/>
</dbReference>
<dbReference type="Pfam" id="PF00012">
    <property type="entry name" value="HSP70"/>
    <property type="match status" value="1"/>
</dbReference>
<dbReference type="PRINTS" id="PR00301">
    <property type="entry name" value="HEATSHOCK70"/>
</dbReference>
<dbReference type="SUPFAM" id="SSF53067">
    <property type="entry name" value="Actin-like ATPase domain"/>
    <property type="match status" value="2"/>
</dbReference>
<dbReference type="SUPFAM" id="SSF100920">
    <property type="entry name" value="Heat shock protein 70kD (HSP70), peptide-binding domain"/>
    <property type="match status" value="1"/>
</dbReference>
<dbReference type="PROSITE" id="PS00297">
    <property type="entry name" value="HSP70_1"/>
    <property type="match status" value="1"/>
</dbReference>
<dbReference type="PROSITE" id="PS00329">
    <property type="entry name" value="HSP70_2"/>
    <property type="match status" value="1"/>
</dbReference>
<dbReference type="PROSITE" id="PS01036">
    <property type="entry name" value="HSP70_3"/>
    <property type="match status" value="1"/>
</dbReference>
<protein>
    <recommendedName>
        <fullName evidence="7">Iron-sulfur cluster biogenesis chaperone, mitochondrial</fullName>
        <ecNumber evidence="2">3.6.4.10</ecNumber>
    </recommendedName>
    <alternativeName>
        <fullName>Heat shock 70 kDa protein</fullName>
    </alternativeName>
</protein>
<evidence type="ECO:0000250" key="1">
    <source>
        <dbReference type="UniProtKB" id="P0CS90"/>
    </source>
</evidence>
<evidence type="ECO:0000250" key="2">
    <source>
        <dbReference type="UniProtKB" id="P22774"/>
    </source>
</evidence>
<evidence type="ECO:0000250" key="3">
    <source>
        <dbReference type="UniProtKB" id="Q05931"/>
    </source>
</evidence>
<evidence type="ECO:0000255" key="4"/>
<evidence type="ECO:0000256" key="5">
    <source>
        <dbReference type="SAM" id="MobiDB-lite"/>
    </source>
</evidence>
<evidence type="ECO:0000269" key="6">
    <source>
    </source>
</evidence>
<evidence type="ECO:0000305" key="7"/>
<organism>
    <name type="scientific">Emericella nidulans (strain FGSC A4 / ATCC 38163 / CBS 112.46 / NRRL 194 / M139)</name>
    <name type="common">Aspergillus nidulans</name>
    <dbReference type="NCBI Taxonomy" id="227321"/>
    <lineage>
        <taxon>Eukaryota</taxon>
        <taxon>Fungi</taxon>
        <taxon>Dikarya</taxon>
        <taxon>Ascomycota</taxon>
        <taxon>Pezizomycotina</taxon>
        <taxon>Eurotiomycetes</taxon>
        <taxon>Eurotiomycetidae</taxon>
        <taxon>Eurotiales</taxon>
        <taxon>Aspergillaceae</taxon>
        <taxon>Aspergillus</taxon>
        <taxon>Aspergillus subgen. Nidulantes</taxon>
    </lineage>
</organism>
<keyword id="KW-0067">ATP-binding</keyword>
<keyword id="KW-0175">Coiled coil</keyword>
<keyword id="KW-0378">Hydrolase</keyword>
<keyword id="KW-0496">Mitochondrion</keyword>
<keyword id="KW-0547">Nucleotide-binding</keyword>
<keyword id="KW-1185">Reference proteome</keyword>
<keyword id="KW-0346">Stress response</keyword>
<keyword id="KW-0809">Transit peptide</keyword>
<accession>Q5B0C0</accession>
<accession>C8V337</accession>